<evidence type="ECO:0000255" key="1">
    <source>
        <dbReference type="HAMAP-Rule" id="MF_00523"/>
    </source>
</evidence>
<dbReference type="EC" id="2.3.1.191" evidence="1"/>
<dbReference type="EMBL" id="CP000767">
    <property type="protein sequence ID" value="EAT99538.1"/>
    <property type="molecule type" value="Genomic_DNA"/>
</dbReference>
<dbReference type="RefSeq" id="WP_011992269.1">
    <property type="nucleotide sequence ID" value="NC_009715.2"/>
</dbReference>
<dbReference type="SMR" id="A7GYD3"/>
<dbReference type="STRING" id="360105.CCV52592_1430"/>
<dbReference type="KEGG" id="ccv:CCV52592_1430"/>
<dbReference type="HOGENOM" id="CLU_049865_0_1_7"/>
<dbReference type="OrthoDB" id="9784739at2"/>
<dbReference type="UniPathway" id="UPA00973"/>
<dbReference type="Proteomes" id="UP000006380">
    <property type="component" value="Chromosome"/>
</dbReference>
<dbReference type="GO" id="GO:0016020">
    <property type="term" value="C:membrane"/>
    <property type="evidence" value="ECO:0007669"/>
    <property type="project" value="GOC"/>
</dbReference>
<dbReference type="GO" id="GO:0016410">
    <property type="term" value="F:N-acyltransferase activity"/>
    <property type="evidence" value="ECO:0007669"/>
    <property type="project" value="InterPro"/>
</dbReference>
<dbReference type="GO" id="GO:0009245">
    <property type="term" value="P:lipid A biosynthetic process"/>
    <property type="evidence" value="ECO:0007669"/>
    <property type="project" value="UniProtKB-UniRule"/>
</dbReference>
<dbReference type="CDD" id="cd03352">
    <property type="entry name" value="LbH_LpxD"/>
    <property type="match status" value="1"/>
</dbReference>
<dbReference type="Gene3D" id="2.160.10.10">
    <property type="entry name" value="Hexapeptide repeat proteins"/>
    <property type="match status" value="1"/>
</dbReference>
<dbReference type="Gene3D" id="3.40.1390.10">
    <property type="entry name" value="MurE/MurF, N-terminal domain"/>
    <property type="match status" value="1"/>
</dbReference>
<dbReference type="HAMAP" id="MF_00523">
    <property type="entry name" value="LpxD"/>
    <property type="match status" value="1"/>
</dbReference>
<dbReference type="InterPro" id="IPR001451">
    <property type="entry name" value="Hexapep"/>
</dbReference>
<dbReference type="InterPro" id="IPR007691">
    <property type="entry name" value="LpxD"/>
</dbReference>
<dbReference type="InterPro" id="IPR011004">
    <property type="entry name" value="Trimer_LpxA-like_sf"/>
</dbReference>
<dbReference type="InterPro" id="IPR020573">
    <property type="entry name" value="UDP_GlcNAc_AcTrfase_non-rep"/>
</dbReference>
<dbReference type="NCBIfam" id="TIGR01853">
    <property type="entry name" value="lipid_A_lpxD"/>
    <property type="match status" value="1"/>
</dbReference>
<dbReference type="NCBIfam" id="NF002060">
    <property type="entry name" value="PRK00892.1"/>
    <property type="match status" value="1"/>
</dbReference>
<dbReference type="PANTHER" id="PTHR43378">
    <property type="entry name" value="UDP-3-O-ACYLGLUCOSAMINE N-ACYLTRANSFERASE"/>
    <property type="match status" value="1"/>
</dbReference>
<dbReference type="PANTHER" id="PTHR43378:SF2">
    <property type="entry name" value="UDP-3-O-ACYLGLUCOSAMINE N-ACYLTRANSFERASE 1, MITOCHONDRIAL-RELATED"/>
    <property type="match status" value="1"/>
</dbReference>
<dbReference type="Pfam" id="PF00132">
    <property type="entry name" value="Hexapep"/>
    <property type="match status" value="1"/>
</dbReference>
<dbReference type="Pfam" id="PF04613">
    <property type="entry name" value="LpxD"/>
    <property type="match status" value="1"/>
</dbReference>
<dbReference type="SUPFAM" id="SSF51161">
    <property type="entry name" value="Trimeric LpxA-like enzymes"/>
    <property type="match status" value="1"/>
</dbReference>
<dbReference type="PROSITE" id="PS00101">
    <property type="entry name" value="HEXAPEP_TRANSFERASES"/>
    <property type="match status" value="1"/>
</dbReference>
<accession>A7GYD3</accession>
<name>LPXD_CAMC5</name>
<organism>
    <name type="scientific">Campylobacter curvus (strain 525.92)</name>
    <dbReference type="NCBI Taxonomy" id="360105"/>
    <lineage>
        <taxon>Bacteria</taxon>
        <taxon>Pseudomonadati</taxon>
        <taxon>Campylobacterota</taxon>
        <taxon>Epsilonproteobacteria</taxon>
        <taxon>Campylobacterales</taxon>
        <taxon>Campylobacteraceae</taxon>
        <taxon>Campylobacter</taxon>
    </lineage>
</organism>
<reference key="1">
    <citation type="submission" date="2007-07" db="EMBL/GenBank/DDBJ databases">
        <title>Genome sequence of Campylobacter curvus 525.92 isolated from human feces.</title>
        <authorList>
            <person name="Fouts D.E."/>
            <person name="Mongodin E.F."/>
            <person name="Puiu D."/>
            <person name="Sebastian Y."/>
            <person name="Miller W.G."/>
            <person name="Mandrell R.E."/>
            <person name="Lastovica A.J."/>
            <person name="Nelson K.E."/>
        </authorList>
    </citation>
    <scope>NUCLEOTIDE SEQUENCE [LARGE SCALE GENOMIC DNA]</scope>
    <source>
        <strain>525.92</strain>
    </source>
</reference>
<keyword id="KW-0012">Acyltransferase</keyword>
<keyword id="KW-0441">Lipid A biosynthesis</keyword>
<keyword id="KW-0444">Lipid biosynthesis</keyword>
<keyword id="KW-0443">Lipid metabolism</keyword>
<keyword id="KW-1185">Reference proteome</keyword>
<keyword id="KW-0677">Repeat</keyword>
<keyword id="KW-0808">Transferase</keyword>
<comment type="function">
    <text evidence="1">Catalyzes the N-acylation of UDP-3-O-acylglucosamine using 3-hydroxyacyl-ACP as the acyl donor. Is involved in the biosynthesis of lipid A, a phosphorylated glycolipid that anchors the lipopolysaccharide to the outer membrane of the cell.</text>
</comment>
<comment type="catalytic activity">
    <reaction evidence="1">
        <text>a UDP-3-O-[(3R)-3-hydroxyacyl]-alpha-D-glucosamine + a (3R)-hydroxyacyl-[ACP] = a UDP-2-N,3-O-bis[(3R)-3-hydroxyacyl]-alpha-D-glucosamine + holo-[ACP] + H(+)</text>
        <dbReference type="Rhea" id="RHEA:53836"/>
        <dbReference type="Rhea" id="RHEA-COMP:9685"/>
        <dbReference type="Rhea" id="RHEA-COMP:9945"/>
        <dbReference type="ChEBI" id="CHEBI:15378"/>
        <dbReference type="ChEBI" id="CHEBI:64479"/>
        <dbReference type="ChEBI" id="CHEBI:78827"/>
        <dbReference type="ChEBI" id="CHEBI:137740"/>
        <dbReference type="ChEBI" id="CHEBI:137748"/>
        <dbReference type="EC" id="2.3.1.191"/>
    </reaction>
</comment>
<comment type="pathway">
    <text evidence="1">Bacterial outer membrane biogenesis; LPS lipid A biosynthesis.</text>
</comment>
<comment type="subunit">
    <text evidence="1">Homotrimer.</text>
</comment>
<comment type="similarity">
    <text evidence="1">Belongs to the transferase hexapeptide repeat family. LpxD subfamily.</text>
</comment>
<protein>
    <recommendedName>
        <fullName evidence="1">UDP-3-O-acylglucosamine N-acyltransferase</fullName>
        <ecNumber evidence="1">2.3.1.191</ecNumber>
    </recommendedName>
</protein>
<gene>
    <name evidence="1" type="primary">lpxD</name>
    <name type="ordered locus">Ccur92_09210</name>
    <name type="ORF">CCV52592_1430</name>
</gene>
<sequence>MKLSEIAQKTGASFSGEDIEIFALNSLKNANKAELSYCDGEKNAKFIAGSNAGAILISQNLTSFVPEGMSALVCENPHLAFAILSKDFAKPLFCEPKPSNIAESATIMSNAYIGSNVSVGEGSIVMAGVFLGDNVKIGQNCIIHPNVVIYNDCVIGDECHLLANCVIGSDGFGYAHTKTGEHVKIYHNGNVVLGDFVEVGACTTIDRGVFESTMIASYTKIDNLVQIGHNCELGNGCLIVSQTGLAGSTTLGRNVVMGGQSGSAGHVRVGDFAQIAARGGVSKDLDAGKKYAGAYPIMPLDEFFKIQAKILRFFKKN</sequence>
<feature type="chain" id="PRO_1000050938" description="UDP-3-O-acylglucosamine N-acyltransferase">
    <location>
        <begin position="1"/>
        <end position="317"/>
    </location>
</feature>
<feature type="active site" description="Proton acceptor" evidence="1">
    <location>
        <position position="229"/>
    </location>
</feature>
<proteinExistence type="inferred from homology"/>